<organism>
    <name type="scientific">Arabidopsis thaliana</name>
    <name type="common">Mouse-ear cress</name>
    <dbReference type="NCBI Taxonomy" id="3702"/>
    <lineage>
        <taxon>Eukaryota</taxon>
        <taxon>Viridiplantae</taxon>
        <taxon>Streptophyta</taxon>
        <taxon>Embryophyta</taxon>
        <taxon>Tracheophyta</taxon>
        <taxon>Spermatophyta</taxon>
        <taxon>Magnoliopsida</taxon>
        <taxon>eudicotyledons</taxon>
        <taxon>Gunneridae</taxon>
        <taxon>Pentapetalae</taxon>
        <taxon>rosids</taxon>
        <taxon>malvids</taxon>
        <taxon>Brassicales</taxon>
        <taxon>Brassicaceae</taxon>
        <taxon>Camelineae</taxon>
        <taxon>Arabidopsis</taxon>
    </lineage>
</organism>
<name>Y1022_ARATH</name>
<comment type="subcellular location">
    <subcellularLocation>
        <location evidence="1">Nucleus</location>
    </subcellularLocation>
</comment>
<protein>
    <recommendedName>
        <fullName>Putative B3 domain-containing protein At1g50220</fullName>
    </recommendedName>
</protein>
<accession>Q9SX41</accession>
<reference key="1">
    <citation type="journal article" date="2000" name="Nature">
        <title>Sequence and analysis of chromosome 1 of the plant Arabidopsis thaliana.</title>
        <authorList>
            <person name="Theologis A."/>
            <person name="Ecker J.R."/>
            <person name="Palm C.J."/>
            <person name="Federspiel N.A."/>
            <person name="Kaul S."/>
            <person name="White O."/>
            <person name="Alonso J."/>
            <person name="Altafi H."/>
            <person name="Araujo R."/>
            <person name="Bowman C.L."/>
            <person name="Brooks S.Y."/>
            <person name="Buehler E."/>
            <person name="Chan A."/>
            <person name="Chao Q."/>
            <person name="Chen H."/>
            <person name="Cheuk R.F."/>
            <person name="Chin C.W."/>
            <person name="Chung M.K."/>
            <person name="Conn L."/>
            <person name="Conway A.B."/>
            <person name="Conway A.R."/>
            <person name="Creasy T.H."/>
            <person name="Dewar K."/>
            <person name="Dunn P."/>
            <person name="Etgu P."/>
            <person name="Feldblyum T.V."/>
            <person name="Feng J.-D."/>
            <person name="Fong B."/>
            <person name="Fujii C.Y."/>
            <person name="Gill J.E."/>
            <person name="Goldsmith A.D."/>
            <person name="Haas B."/>
            <person name="Hansen N.F."/>
            <person name="Hughes B."/>
            <person name="Huizar L."/>
            <person name="Hunter J.L."/>
            <person name="Jenkins J."/>
            <person name="Johnson-Hopson C."/>
            <person name="Khan S."/>
            <person name="Khaykin E."/>
            <person name="Kim C.J."/>
            <person name="Koo H.L."/>
            <person name="Kremenetskaia I."/>
            <person name="Kurtz D.B."/>
            <person name="Kwan A."/>
            <person name="Lam B."/>
            <person name="Langin-Hooper S."/>
            <person name="Lee A."/>
            <person name="Lee J.M."/>
            <person name="Lenz C.A."/>
            <person name="Li J.H."/>
            <person name="Li Y.-P."/>
            <person name="Lin X."/>
            <person name="Liu S.X."/>
            <person name="Liu Z.A."/>
            <person name="Luros J.S."/>
            <person name="Maiti R."/>
            <person name="Marziali A."/>
            <person name="Militscher J."/>
            <person name="Miranda M."/>
            <person name="Nguyen M."/>
            <person name="Nierman W.C."/>
            <person name="Osborne B.I."/>
            <person name="Pai G."/>
            <person name="Peterson J."/>
            <person name="Pham P.K."/>
            <person name="Rizzo M."/>
            <person name="Rooney T."/>
            <person name="Rowley D."/>
            <person name="Sakano H."/>
            <person name="Salzberg S.L."/>
            <person name="Schwartz J.R."/>
            <person name="Shinn P."/>
            <person name="Southwick A.M."/>
            <person name="Sun H."/>
            <person name="Tallon L.J."/>
            <person name="Tambunga G."/>
            <person name="Toriumi M.J."/>
            <person name="Town C.D."/>
            <person name="Utterback T."/>
            <person name="Van Aken S."/>
            <person name="Vaysberg M."/>
            <person name="Vysotskaia V.S."/>
            <person name="Walker M."/>
            <person name="Wu D."/>
            <person name="Yu G."/>
            <person name="Fraser C.M."/>
            <person name="Venter J.C."/>
            <person name="Davis R.W."/>
        </authorList>
    </citation>
    <scope>NUCLEOTIDE SEQUENCE [LARGE SCALE GENOMIC DNA]</scope>
    <source>
        <strain>cv. Columbia</strain>
    </source>
</reference>
<reference key="2">
    <citation type="journal article" date="2017" name="Plant J.">
        <title>Araport11: a complete reannotation of the Arabidopsis thaliana reference genome.</title>
        <authorList>
            <person name="Cheng C.Y."/>
            <person name="Krishnakumar V."/>
            <person name="Chan A.P."/>
            <person name="Thibaud-Nissen F."/>
            <person name="Schobel S."/>
            <person name="Town C.D."/>
        </authorList>
    </citation>
    <scope>GENOME REANNOTATION</scope>
    <source>
        <strain>cv. Columbia</strain>
    </source>
</reference>
<reference key="3">
    <citation type="journal article" date="2008" name="Trends Plant Sci.">
        <title>The plant B3 superfamily.</title>
        <authorList>
            <person name="Swaminathan K."/>
            <person name="Peterson K."/>
            <person name="Jack T."/>
        </authorList>
    </citation>
    <scope>GENE FAMILY</scope>
</reference>
<gene>
    <name type="ordered locus">At1g50220</name>
    <name type="ORF">F14I3.16</name>
</gene>
<evidence type="ECO:0000250" key="1"/>
<keyword id="KW-0238">DNA-binding</keyword>
<keyword id="KW-0539">Nucleus</keyword>
<keyword id="KW-1185">Reference proteome</keyword>
<keyword id="KW-0804">Transcription</keyword>
<keyword id="KW-0805">Transcription regulation</keyword>
<dbReference type="EMBL" id="AC007980">
    <property type="protein sequence ID" value="AAD50056.1"/>
    <property type="molecule type" value="Genomic_DNA"/>
</dbReference>
<dbReference type="EMBL" id="CP002684">
    <property type="protein sequence ID" value="AEE32526.1"/>
    <property type="molecule type" value="Genomic_DNA"/>
</dbReference>
<dbReference type="PIR" id="E96538">
    <property type="entry name" value="E96538"/>
</dbReference>
<dbReference type="RefSeq" id="NP_001319188.1">
    <property type="nucleotide sequence ID" value="NM_001333426.1"/>
</dbReference>
<dbReference type="SMR" id="Q9SX41"/>
<dbReference type="iPTMnet" id="Q9SX41"/>
<dbReference type="PaxDb" id="3702-AT1G50220.1"/>
<dbReference type="EnsemblPlants" id="AT1G50220.1">
    <property type="protein sequence ID" value="AT1G50220.1"/>
    <property type="gene ID" value="AT1G50220"/>
</dbReference>
<dbReference type="GeneID" id="841444"/>
<dbReference type="Gramene" id="AT1G50220.1">
    <property type="protein sequence ID" value="AT1G50220.1"/>
    <property type="gene ID" value="AT1G50220"/>
</dbReference>
<dbReference type="KEGG" id="ath:AT1G50220"/>
<dbReference type="Araport" id="AT1G50220"/>
<dbReference type="TAIR" id="AT1G50220"/>
<dbReference type="HOGENOM" id="CLU_1350544_0_0_1"/>
<dbReference type="InParanoid" id="Q9SX41"/>
<dbReference type="PhylomeDB" id="Q9SX41"/>
<dbReference type="PRO" id="PR:Q9SX41"/>
<dbReference type="Proteomes" id="UP000006548">
    <property type="component" value="Chromosome 1"/>
</dbReference>
<dbReference type="ExpressionAtlas" id="Q9SX41">
    <property type="expression patterns" value="baseline"/>
</dbReference>
<dbReference type="GO" id="GO:0005634">
    <property type="term" value="C:nucleus"/>
    <property type="evidence" value="ECO:0007669"/>
    <property type="project" value="UniProtKB-SubCell"/>
</dbReference>
<dbReference type="GO" id="GO:0003677">
    <property type="term" value="F:DNA binding"/>
    <property type="evidence" value="ECO:0007669"/>
    <property type="project" value="UniProtKB-KW"/>
</dbReference>
<dbReference type="CDD" id="cd10017">
    <property type="entry name" value="B3_DNA"/>
    <property type="match status" value="1"/>
</dbReference>
<dbReference type="Gene3D" id="2.40.330.10">
    <property type="entry name" value="DNA-binding pseudobarrel domain"/>
    <property type="match status" value="1"/>
</dbReference>
<dbReference type="InterPro" id="IPR003340">
    <property type="entry name" value="B3_DNA-bd"/>
</dbReference>
<dbReference type="InterPro" id="IPR051442">
    <property type="entry name" value="B3_domain"/>
</dbReference>
<dbReference type="InterPro" id="IPR015300">
    <property type="entry name" value="DNA-bd_pseudobarrel_sf"/>
</dbReference>
<dbReference type="PANTHER" id="PTHR34269:SF15">
    <property type="entry name" value="TF-B3 DOMAIN-CONTAINING PROTEIN"/>
    <property type="match status" value="1"/>
</dbReference>
<dbReference type="PANTHER" id="PTHR34269">
    <property type="entry name" value="TRANSCRIPTION FACTOR B3-DOMAIN FAMILY-RELATED"/>
    <property type="match status" value="1"/>
</dbReference>
<dbReference type="SMART" id="SM01019">
    <property type="entry name" value="B3"/>
    <property type="match status" value="1"/>
</dbReference>
<dbReference type="SUPFAM" id="SSF101936">
    <property type="entry name" value="DNA-binding pseudobarrel domain"/>
    <property type="match status" value="1"/>
</dbReference>
<proteinExistence type="inferred from homology"/>
<sequence length="203" mass="23668">MKIKHWDRWLASLKDDDYLKNIEAIKLYLAVMSIYEPDLLDEYMIDDDFHPMISRLKNVTLDVTSARFKELYITESKMNYARDELDGAMIISKTLTKSDIVGNVALPKAQVMSVLTRMNGVTDEGLDNGFEVQVHDIMEDDLYTVTLKRIDDMKYYFGTGWSTMKHSLDLVEGDVQKLYWDQFENKFIVLNFQHKTMGIMIPV</sequence>
<feature type="chain" id="PRO_0000412842" description="Putative B3 domain-containing protein At1g50220">
    <location>
        <begin position="1"/>
        <end position="203"/>
    </location>
</feature>
<feature type="DNA-binding region" description="TF-B3">
    <location>
        <begin position="99"/>
        <end position="195"/>
    </location>
</feature>